<sequence length="127" mass="14353">MITGIQITKANNEALLNSFWLLDDEKAELRCVCAKSGYAEDQIVPTSELGEIEYREVPLEVQPTVRVEGGQHLNVNVLSRDTLEDAVKNPEKYPQLTIRVSGYAVRFNSLTPEQQRDVITRTFTESL</sequence>
<comment type="function">
    <text evidence="1">Acts as a radical domain for damaged PFL and possibly other radical proteins.</text>
</comment>
<protein>
    <recommendedName>
        <fullName evidence="1">Autonomous glycyl radical cofactor</fullName>
    </recommendedName>
</protein>
<gene>
    <name evidence="1" type="primary">grcA</name>
    <name type="ordered locus">YPA_2438</name>
</gene>
<dbReference type="EMBL" id="CP000308">
    <property type="protein sequence ID" value="ABG14403.1"/>
    <property type="molecule type" value="Genomic_DNA"/>
</dbReference>
<dbReference type="RefSeq" id="WP_002209664.1">
    <property type="nucleotide sequence ID" value="NZ_CP009906.1"/>
</dbReference>
<dbReference type="SMR" id="Q1C569"/>
<dbReference type="GeneID" id="57975986"/>
<dbReference type="KEGG" id="ypa:YPA_2438"/>
<dbReference type="Proteomes" id="UP000001971">
    <property type="component" value="Chromosome"/>
</dbReference>
<dbReference type="GO" id="GO:0005829">
    <property type="term" value="C:cytosol"/>
    <property type="evidence" value="ECO:0007669"/>
    <property type="project" value="TreeGrafter"/>
</dbReference>
<dbReference type="GO" id="GO:0008861">
    <property type="term" value="F:formate C-acetyltransferase activity"/>
    <property type="evidence" value="ECO:0007669"/>
    <property type="project" value="TreeGrafter"/>
</dbReference>
<dbReference type="FunFam" id="3.20.70.20:FF:000002">
    <property type="entry name" value="Autonomous glycyl radical cofactor"/>
    <property type="match status" value="1"/>
</dbReference>
<dbReference type="Gene3D" id="3.20.70.20">
    <property type="match status" value="1"/>
</dbReference>
<dbReference type="HAMAP" id="MF_00806">
    <property type="entry name" value="GrcA"/>
    <property type="match status" value="1"/>
</dbReference>
<dbReference type="InterPro" id="IPR050244">
    <property type="entry name" value="Auton_GlycylRad_Cofactor"/>
</dbReference>
<dbReference type="InterPro" id="IPR019777">
    <property type="entry name" value="Form_AcTrfase_GR_CS"/>
</dbReference>
<dbReference type="InterPro" id="IPR001150">
    <property type="entry name" value="Gly_radical"/>
</dbReference>
<dbReference type="InterPro" id="IPR011140">
    <property type="entry name" value="Glycyl_radical_cofactor_GrcA"/>
</dbReference>
<dbReference type="NCBIfam" id="TIGR04365">
    <property type="entry name" value="spare_glycyl"/>
    <property type="match status" value="1"/>
</dbReference>
<dbReference type="PANTHER" id="PTHR30191">
    <property type="entry name" value="FORMATE ACETYLTRANSFERASE"/>
    <property type="match status" value="1"/>
</dbReference>
<dbReference type="PANTHER" id="PTHR30191:SF0">
    <property type="entry name" value="FORMATE ACETYLTRANSFERASE 1"/>
    <property type="match status" value="1"/>
</dbReference>
<dbReference type="Pfam" id="PF01228">
    <property type="entry name" value="Gly_radical"/>
    <property type="match status" value="1"/>
</dbReference>
<dbReference type="PIRSF" id="PIRSF000378">
    <property type="entry name" value="Gly_radicl_yfiD"/>
    <property type="match status" value="1"/>
</dbReference>
<dbReference type="SUPFAM" id="SSF51998">
    <property type="entry name" value="PFL-like glycyl radical enzymes"/>
    <property type="match status" value="1"/>
</dbReference>
<dbReference type="PROSITE" id="PS00850">
    <property type="entry name" value="GLY_RADICAL_1"/>
    <property type="match status" value="1"/>
</dbReference>
<dbReference type="PROSITE" id="PS51149">
    <property type="entry name" value="GLY_RADICAL_2"/>
    <property type="match status" value="1"/>
</dbReference>
<name>GRCA_YERPA</name>
<accession>Q1C569</accession>
<proteinExistence type="inferred from homology"/>
<feature type="chain" id="PRO_1000083742" description="Autonomous glycyl radical cofactor">
    <location>
        <begin position="1"/>
        <end position="127"/>
    </location>
</feature>
<feature type="domain" description="Glycine radical" evidence="1">
    <location>
        <begin position="5"/>
        <end position="127"/>
    </location>
</feature>
<feature type="modified residue" description="Glycine radical" evidence="1">
    <location>
        <position position="102"/>
    </location>
</feature>
<evidence type="ECO:0000255" key="1">
    <source>
        <dbReference type="HAMAP-Rule" id="MF_00806"/>
    </source>
</evidence>
<keyword id="KW-0556">Organic radical</keyword>
<organism>
    <name type="scientific">Yersinia pestis bv. Antiqua (strain Antiqua)</name>
    <dbReference type="NCBI Taxonomy" id="360102"/>
    <lineage>
        <taxon>Bacteria</taxon>
        <taxon>Pseudomonadati</taxon>
        <taxon>Pseudomonadota</taxon>
        <taxon>Gammaproteobacteria</taxon>
        <taxon>Enterobacterales</taxon>
        <taxon>Yersiniaceae</taxon>
        <taxon>Yersinia</taxon>
    </lineage>
</organism>
<reference key="1">
    <citation type="journal article" date="2006" name="J. Bacteriol.">
        <title>Complete genome sequence of Yersinia pestis strains Antiqua and Nepal516: evidence of gene reduction in an emerging pathogen.</title>
        <authorList>
            <person name="Chain P.S.G."/>
            <person name="Hu P."/>
            <person name="Malfatti S.A."/>
            <person name="Radnedge L."/>
            <person name="Larimer F."/>
            <person name="Vergez L.M."/>
            <person name="Worsham P."/>
            <person name="Chu M.C."/>
            <person name="Andersen G.L."/>
        </authorList>
    </citation>
    <scope>NUCLEOTIDE SEQUENCE [LARGE SCALE GENOMIC DNA]</scope>
    <source>
        <strain>Antiqua</strain>
    </source>
</reference>